<protein>
    <recommendedName>
        <fullName evidence="1">Methionine--tRNA ligase</fullName>
        <ecNumber evidence="1">6.1.1.10</ecNumber>
    </recommendedName>
    <alternativeName>
        <fullName evidence="1">Methionyl-tRNA synthetase</fullName>
        <shortName evidence="1">MetRS</shortName>
    </alternativeName>
</protein>
<gene>
    <name evidence="1" type="primary">metG</name>
    <name type="ordered locus">YpsIP31758_2455</name>
</gene>
<reference key="1">
    <citation type="journal article" date="2007" name="PLoS Genet.">
        <title>The complete genome sequence of Yersinia pseudotuberculosis IP31758, the causative agent of Far East scarlet-like fever.</title>
        <authorList>
            <person name="Eppinger M."/>
            <person name="Rosovitz M.J."/>
            <person name="Fricke W.F."/>
            <person name="Rasko D.A."/>
            <person name="Kokorina G."/>
            <person name="Fayolle C."/>
            <person name="Lindler L.E."/>
            <person name="Carniel E."/>
            <person name="Ravel J."/>
        </authorList>
    </citation>
    <scope>NUCLEOTIDE SEQUENCE [LARGE SCALE GENOMIC DNA]</scope>
    <source>
        <strain>IP 31758</strain>
    </source>
</reference>
<evidence type="ECO:0000255" key="1">
    <source>
        <dbReference type="HAMAP-Rule" id="MF_00098"/>
    </source>
</evidence>
<organism>
    <name type="scientific">Yersinia pseudotuberculosis serotype O:1b (strain IP 31758)</name>
    <dbReference type="NCBI Taxonomy" id="349747"/>
    <lineage>
        <taxon>Bacteria</taxon>
        <taxon>Pseudomonadati</taxon>
        <taxon>Pseudomonadota</taxon>
        <taxon>Gammaproteobacteria</taxon>
        <taxon>Enterobacterales</taxon>
        <taxon>Yersiniaceae</taxon>
        <taxon>Yersinia</taxon>
    </lineage>
</organism>
<keyword id="KW-0030">Aminoacyl-tRNA synthetase</keyword>
<keyword id="KW-0067">ATP-binding</keyword>
<keyword id="KW-0963">Cytoplasm</keyword>
<keyword id="KW-0436">Ligase</keyword>
<keyword id="KW-0479">Metal-binding</keyword>
<keyword id="KW-0547">Nucleotide-binding</keyword>
<keyword id="KW-0648">Protein biosynthesis</keyword>
<keyword id="KW-0694">RNA-binding</keyword>
<keyword id="KW-0820">tRNA-binding</keyword>
<keyword id="KW-0862">Zinc</keyword>
<accession>A7FJJ6</accession>
<feature type="chain" id="PRO_0000331934" description="Methionine--tRNA ligase">
    <location>
        <begin position="1"/>
        <end position="675"/>
    </location>
</feature>
<feature type="domain" description="tRNA-binding" evidence="1">
    <location>
        <begin position="573"/>
        <end position="675"/>
    </location>
</feature>
<feature type="short sequence motif" description="'HIGH' region">
    <location>
        <begin position="15"/>
        <end position="25"/>
    </location>
</feature>
<feature type="short sequence motif" description="'KMSKS' region">
    <location>
        <begin position="332"/>
        <end position="336"/>
    </location>
</feature>
<feature type="binding site" evidence="1">
    <location>
        <position position="146"/>
    </location>
    <ligand>
        <name>Zn(2+)</name>
        <dbReference type="ChEBI" id="CHEBI:29105"/>
    </ligand>
</feature>
<feature type="binding site" evidence="1">
    <location>
        <position position="149"/>
    </location>
    <ligand>
        <name>Zn(2+)</name>
        <dbReference type="ChEBI" id="CHEBI:29105"/>
    </ligand>
</feature>
<feature type="binding site" evidence="1">
    <location>
        <position position="159"/>
    </location>
    <ligand>
        <name>Zn(2+)</name>
        <dbReference type="ChEBI" id="CHEBI:29105"/>
    </ligand>
</feature>
<feature type="binding site" evidence="1">
    <location>
        <position position="162"/>
    </location>
    <ligand>
        <name>Zn(2+)</name>
        <dbReference type="ChEBI" id="CHEBI:29105"/>
    </ligand>
</feature>
<feature type="binding site" evidence="1">
    <location>
        <position position="335"/>
    </location>
    <ligand>
        <name>ATP</name>
        <dbReference type="ChEBI" id="CHEBI:30616"/>
    </ligand>
</feature>
<name>SYM_YERP3</name>
<sequence length="675" mass="75636">MAQVAKKILVTCALPYANGSIHLGHMLEHIQADIWVRFQRMRGNQVHFICADDAHGTPIMLKAQQMGIEPEQMIAEMSQEHQQDFAGFAISYDNYHSTHSDENRELSSLIYGRLKANGYIKNRTISQLYDPEKGMFLPDRFVKGTCPKCKAPEQYGDNCEVCGATYSPTELIDPKSAVSGATPVMRESEHFFFDLPAFSDMLQAWTRSGALQEQVANKMQEWFDSGLQQWDITRDAPYFGFEVPDAPGKYFYVWLDAPIGYMGAFKNLCDKRGDLDFDEFWGKDAKTDLYHFIGKDIVYFHSLFWPAMLEGSNFRKPTNLFVHGYVTVNGAKMSKSRGTFIKAGTYLKYLDADCLRYYYAAKLSSRIDDIDLNLEDFVQRVNADIVNKVVNLASRNAGFINKRFAGQLADQLADPVLYKTFTDAATSIADAYNNRESGKAIREIMALADVANRYVDEQAPWVVAKQEGRDADLHAICSMGINLFRVLMTYLKPVLPSLTERTEAFLNTELTWDSIEQPLLGHSITAFKALFNRIDLDKVNEMVASSKEDMAPATRVTGPLADDPIQETISFDDFAKVDMRIALIQQAEFVEGSDKLLKLTLELGGETRQVFSGIRSAYPDPKALEGRMTVMVANLAPRKMRFGVSEGMVMAAGPGGSDIFLLSPDSGAQPGMQVK</sequence>
<comment type="function">
    <text evidence="1">Is required not only for elongation of protein synthesis but also for the initiation of all mRNA translation through initiator tRNA(fMet) aminoacylation.</text>
</comment>
<comment type="catalytic activity">
    <reaction evidence="1">
        <text>tRNA(Met) + L-methionine + ATP = L-methionyl-tRNA(Met) + AMP + diphosphate</text>
        <dbReference type="Rhea" id="RHEA:13481"/>
        <dbReference type="Rhea" id="RHEA-COMP:9667"/>
        <dbReference type="Rhea" id="RHEA-COMP:9698"/>
        <dbReference type="ChEBI" id="CHEBI:30616"/>
        <dbReference type="ChEBI" id="CHEBI:33019"/>
        <dbReference type="ChEBI" id="CHEBI:57844"/>
        <dbReference type="ChEBI" id="CHEBI:78442"/>
        <dbReference type="ChEBI" id="CHEBI:78530"/>
        <dbReference type="ChEBI" id="CHEBI:456215"/>
        <dbReference type="EC" id="6.1.1.10"/>
    </reaction>
</comment>
<comment type="cofactor">
    <cofactor evidence="1">
        <name>Zn(2+)</name>
        <dbReference type="ChEBI" id="CHEBI:29105"/>
    </cofactor>
    <text evidence="1">Binds 1 zinc ion per subunit.</text>
</comment>
<comment type="subunit">
    <text evidence="1">Homodimer.</text>
</comment>
<comment type="subcellular location">
    <subcellularLocation>
        <location evidence="1">Cytoplasm</location>
    </subcellularLocation>
</comment>
<comment type="similarity">
    <text evidence="1">Belongs to the class-I aminoacyl-tRNA synthetase family. MetG type 1 subfamily.</text>
</comment>
<dbReference type="EC" id="6.1.1.10" evidence="1"/>
<dbReference type="EMBL" id="CP000720">
    <property type="protein sequence ID" value="ABS46444.1"/>
    <property type="molecule type" value="Genomic_DNA"/>
</dbReference>
<dbReference type="RefSeq" id="WP_002211870.1">
    <property type="nucleotide sequence ID" value="NC_009708.1"/>
</dbReference>
<dbReference type="SMR" id="A7FJJ6"/>
<dbReference type="GeneID" id="57977046"/>
<dbReference type="KEGG" id="ypi:YpsIP31758_2455"/>
<dbReference type="HOGENOM" id="CLU_009710_7_0_6"/>
<dbReference type="Proteomes" id="UP000002412">
    <property type="component" value="Chromosome"/>
</dbReference>
<dbReference type="GO" id="GO:0005829">
    <property type="term" value="C:cytosol"/>
    <property type="evidence" value="ECO:0007669"/>
    <property type="project" value="TreeGrafter"/>
</dbReference>
<dbReference type="GO" id="GO:0005524">
    <property type="term" value="F:ATP binding"/>
    <property type="evidence" value="ECO:0007669"/>
    <property type="project" value="UniProtKB-UniRule"/>
</dbReference>
<dbReference type="GO" id="GO:0046872">
    <property type="term" value="F:metal ion binding"/>
    <property type="evidence" value="ECO:0007669"/>
    <property type="project" value="UniProtKB-KW"/>
</dbReference>
<dbReference type="GO" id="GO:0004825">
    <property type="term" value="F:methionine-tRNA ligase activity"/>
    <property type="evidence" value="ECO:0007669"/>
    <property type="project" value="UniProtKB-UniRule"/>
</dbReference>
<dbReference type="GO" id="GO:0000049">
    <property type="term" value="F:tRNA binding"/>
    <property type="evidence" value="ECO:0007669"/>
    <property type="project" value="UniProtKB-KW"/>
</dbReference>
<dbReference type="GO" id="GO:0006431">
    <property type="term" value="P:methionyl-tRNA aminoacylation"/>
    <property type="evidence" value="ECO:0007669"/>
    <property type="project" value="UniProtKB-UniRule"/>
</dbReference>
<dbReference type="CDD" id="cd07957">
    <property type="entry name" value="Anticodon_Ia_Met"/>
    <property type="match status" value="1"/>
</dbReference>
<dbReference type="CDD" id="cd00814">
    <property type="entry name" value="MetRS_core"/>
    <property type="match status" value="1"/>
</dbReference>
<dbReference type="CDD" id="cd02800">
    <property type="entry name" value="tRNA_bind_EcMetRS_like"/>
    <property type="match status" value="1"/>
</dbReference>
<dbReference type="FunFam" id="1.10.730.10:FF:000005">
    <property type="entry name" value="Methionine--tRNA ligase"/>
    <property type="match status" value="1"/>
</dbReference>
<dbReference type="FunFam" id="2.20.28.20:FF:000001">
    <property type="entry name" value="Methionine--tRNA ligase"/>
    <property type="match status" value="1"/>
</dbReference>
<dbReference type="FunFam" id="2.40.50.140:FF:000042">
    <property type="entry name" value="Methionine--tRNA ligase"/>
    <property type="match status" value="1"/>
</dbReference>
<dbReference type="Gene3D" id="3.40.50.620">
    <property type="entry name" value="HUPs"/>
    <property type="match status" value="1"/>
</dbReference>
<dbReference type="Gene3D" id="1.10.730.10">
    <property type="entry name" value="Isoleucyl-tRNA Synthetase, Domain 1"/>
    <property type="match status" value="1"/>
</dbReference>
<dbReference type="Gene3D" id="2.20.28.20">
    <property type="entry name" value="Methionyl-tRNA synthetase, Zn-domain"/>
    <property type="match status" value="1"/>
</dbReference>
<dbReference type="Gene3D" id="2.40.50.140">
    <property type="entry name" value="Nucleic acid-binding proteins"/>
    <property type="match status" value="1"/>
</dbReference>
<dbReference type="HAMAP" id="MF_00098">
    <property type="entry name" value="Met_tRNA_synth_type1"/>
    <property type="match status" value="1"/>
</dbReference>
<dbReference type="InterPro" id="IPR001412">
    <property type="entry name" value="aa-tRNA-synth_I_CS"/>
</dbReference>
<dbReference type="InterPro" id="IPR041872">
    <property type="entry name" value="Anticodon_Met"/>
</dbReference>
<dbReference type="InterPro" id="IPR004495">
    <property type="entry name" value="Met-tRNA-synth_bsu_C"/>
</dbReference>
<dbReference type="InterPro" id="IPR023458">
    <property type="entry name" value="Met-tRNA_ligase_1"/>
</dbReference>
<dbReference type="InterPro" id="IPR014758">
    <property type="entry name" value="Met-tRNA_synth"/>
</dbReference>
<dbReference type="InterPro" id="IPR015413">
    <property type="entry name" value="Methionyl/Leucyl_tRNA_Synth"/>
</dbReference>
<dbReference type="InterPro" id="IPR033911">
    <property type="entry name" value="MetRS_core"/>
</dbReference>
<dbReference type="InterPro" id="IPR029038">
    <property type="entry name" value="MetRS_Zn"/>
</dbReference>
<dbReference type="InterPro" id="IPR012340">
    <property type="entry name" value="NA-bd_OB-fold"/>
</dbReference>
<dbReference type="InterPro" id="IPR014729">
    <property type="entry name" value="Rossmann-like_a/b/a_fold"/>
</dbReference>
<dbReference type="InterPro" id="IPR002547">
    <property type="entry name" value="tRNA-bd_dom"/>
</dbReference>
<dbReference type="InterPro" id="IPR009080">
    <property type="entry name" value="tRNAsynth_Ia_anticodon-bd"/>
</dbReference>
<dbReference type="NCBIfam" id="TIGR00398">
    <property type="entry name" value="metG"/>
    <property type="match status" value="1"/>
</dbReference>
<dbReference type="NCBIfam" id="TIGR00399">
    <property type="entry name" value="metG_C_term"/>
    <property type="match status" value="1"/>
</dbReference>
<dbReference type="NCBIfam" id="NF001100">
    <property type="entry name" value="PRK00133.1"/>
    <property type="match status" value="1"/>
</dbReference>
<dbReference type="PANTHER" id="PTHR45765">
    <property type="entry name" value="METHIONINE--TRNA LIGASE"/>
    <property type="match status" value="1"/>
</dbReference>
<dbReference type="PANTHER" id="PTHR45765:SF1">
    <property type="entry name" value="METHIONINE--TRNA LIGASE, CYTOPLASMIC"/>
    <property type="match status" value="1"/>
</dbReference>
<dbReference type="Pfam" id="PF19303">
    <property type="entry name" value="Anticodon_3"/>
    <property type="match status" value="1"/>
</dbReference>
<dbReference type="Pfam" id="PF09334">
    <property type="entry name" value="tRNA-synt_1g"/>
    <property type="match status" value="1"/>
</dbReference>
<dbReference type="Pfam" id="PF01588">
    <property type="entry name" value="tRNA_bind"/>
    <property type="match status" value="1"/>
</dbReference>
<dbReference type="PRINTS" id="PR01041">
    <property type="entry name" value="TRNASYNTHMET"/>
</dbReference>
<dbReference type="SUPFAM" id="SSF47323">
    <property type="entry name" value="Anticodon-binding domain of a subclass of class I aminoacyl-tRNA synthetases"/>
    <property type="match status" value="1"/>
</dbReference>
<dbReference type="SUPFAM" id="SSF57770">
    <property type="entry name" value="Methionyl-tRNA synthetase (MetRS), Zn-domain"/>
    <property type="match status" value="1"/>
</dbReference>
<dbReference type="SUPFAM" id="SSF50249">
    <property type="entry name" value="Nucleic acid-binding proteins"/>
    <property type="match status" value="1"/>
</dbReference>
<dbReference type="SUPFAM" id="SSF52374">
    <property type="entry name" value="Nucleotidylyl transferase"/>
    <property type="match status" value="1"/>
</dbReference>
<dbReference type="PROSITE" id="PS00178">
    <property type="entry name" value="AA_TRNA_LIGASE_I"/>
    <property type="match status" value="1"/>
</dbReference>
<dbReference type="PROSITE" id="PS50886">
    <property type="entry name" value="TRBD"/>
    <property type="match status" value="1"/>
</dbReference>
<proteinExistence type="inferred from homology"/>